<proteinExistence type="evidence at transcript level"/>
<gene>
    <name type="primary">Rsl24d1</name>
</gene>
<comment type="function">
    <text evidence="1">Involved in the biogenesis of the 60S ribosomal subunit. Ensures the docking of GTPBP4/NOG1 to pre-60S particles (By similarity).</text>
</comment>
<comment type="subunit">
    <text evidence="1 2">Associated with nucleolar and cytoplasmic pre-60S particles (By similarity). At the end of biogenesis it dissociates from cytoplasmic pre-60S particles and is likely to be exchanged for its ribosomal homolog, RPL24 (By similarity).</text>
</comment>
<comment type="subcellular location">
    <subcellularLocation>
        <location evidence="2">Nucleus</location>
        <location evidence="2">Nucleolus</location>
    </subcellularLocation>
</comment>
<comment type="similarity">
    <text evidence="3">Belongs to the eukaryotic ribosomal protein eL24 family.</text>
</comment>
<name>RLP24_MOUSE</name>
<reference key="1">
    <citation type="journal article" date="2004" name="Genome Res.">
        <title>The status, quality, and expansion of the NIH full-length cDNA project: the Mammalian Gene Collection (MGC).</title>
        <authorList>
            <consortium name="The MGC Project Team"/>
        </authorList>
    </citation>
    <scope>NUCLEOTIDE SEQUENCE [LARGE SCALE MRNA]</scope>
    <source>
        <strain>Czech II</strain>
        <tissue>Mammary tumor</tissue>
    </source>
</reference>
<feature type="chain" id="PRO_0000136897" description="Probable ribosome biogenesis protein RLP24">
    <location>
        <begin position="1"/>
        <end position="163"/>
    </location>
</feature>
<organism>
    <name type="scientific">Mus musculus</name>
    <name type="common">Mouse</name>
    <dbReference type="NCBI Taxonomy" id="10090"/>
    <lineage>
        <taxon>Eukaryota</taxon>
        <taxon>Metazoa</taxon>
        <taxon>Chordata</taxon>
        <taxon>Craniata</taxon>
        <taxon>Vertebrata</taxon>
        <taxon>Euteleostomi</taxon>
        <taxon>Mammalia</taxon>
        <taxon>Eutheria</taxon>
        <taxon>Euarchontoglires</taxon>
        <taxon>Glires</taxon>
        <taxon>Rodentia</taxon>
        <taxon>Myomorpha</taxon>
        <taxon>Muroidea</taxon>
        <taxon>Muridae</taxon>
        <taxon>Murinae</taxon>
        <taxon>Mus</taxon>
        <taxon>Mus</taxon>
    </lineage>
</organism>
<keyword id="KW-0539">Nucleus</keyword>
<keyword id="KW-1185">Reference proteome</keyword>
<keyword id="KW-0690">Ribosome biogenesis</keyword>
<protein>
    <recommendedName>
        <fullName>Probable ribosome biogenesis protein RLP24</fullName>
    </recommendedName>
    <alternativeName>
        <fullName>Ribosomal L24 domain-containing protein 1</fullName>
    </alternativeName>
    <alternativeName>
        <fullName>Ribosomal protein L24-like</fullName>
    </alternativeName>
</protein>
<dbReference type="EMBL" id="BC003885">
    <property type="protein sequence ID" value="AAH03885.1"/>
    <property type="molecule type" value="mRNA"/>
</dbReference>
<dbReference type="CCDS" id="CCDS40688.1"/>
<dbReference type="RefSeq" id="NP_941011.1">
    <property type="nucleotide sequence ID" value="NM_198609.2"/>
</dbReference>
<dbReference type="SMR" id="Q99L28"/>
<dbReference type="BioGRID" id="230370">
    <property type="interactions" value="1"/>
</dbReference>
<dbReference type="FunCoup" id="Q99L28">
    <property type="interactions" value="3024"/>
</dbReference>
<dbReference type="STRING" id="10090.ENSMUSP00000034738"/>
<dbReference type="iPTMnet" id="Q99L28"/>
<dbReference type="PhosphoSitePlus" id="Q99L28"/>
<dbReference type="PaxDb" id="10090-ENSMUSP00000034738"/>
<dbReference type="ProteomicsDB" id="301599"/>
<dbReference type="Pumba" id="Q99L28"/>
<dbReference type="Antibodypedia" id="25045">
    <property type="antibodies" value="78 antibodies from 19 providers"/>
</dbReference>
<dbReference type="DNASU" id="225215"/>
<dbReference type="Ensembl" id="ENSMUST00000034738.14">
    <property type="protein sequence ID" value="ENSMUSP00000034738.8"/>
    <property type="gene ID" value="ENSMUSG00000032215.16"/>
</dbReference>
<dbReference type="GeneID" id="225215"/>
<dbReference type="KEGG" id="mmu:225215"/>
<dbReference type="UCSC" id="uc009qra.1">
    <property type="organism name" value="mouse"/>
</dbReference>
<dbReference type="AGR" id="MGI:2681840"/>
<dbReference type="CTD" id="51187"/>
<dbReference type="MGI" id="MGI:2681840">
    <property type="gene designation" value="Rsl24d1"/>
</dbReference>
<dbReference type="VEuPathDB" id="HostDB:ENSMUSG00000032215"/>
<dbReference type="eggNOG" id="KOG1723">
    <property type="taxonomic scope" value="Eukaryota"/>
</dbReference>
<dbReference type="GeneTree" id="ENSGT00950000183105"/>
<dbReference type="HOGENOM" id="CLU_089419_2_2_1"/>
<dbReference type="InParanoid" id="Q99L28"/>
<dbReference type="OMA" id="TCYFCSG"/>
<dbReference type="OrthoDB" id="10262490at2759"/>
<dbReference type="PhylomeDB" id="Q99L28"/>
<dbReference type="TreeFam" id="TF314926"/>
<dbReference type="BioGRID-ORCS" id="225215">
    <property type="hits" value="24 hits in 74 CRISPR screens"/>
</dbReference>
<dbReference type="ChiTaRS" id="Rsl24d1">
    <property type="organism name" value="mouse"/>
</dbReference>
<dbReference type="PRO" id="PR:Q99L28"/>
<dbReference type="Proteomes" id="UP000000589">
    <property type="component" value="Chromosome 9"/>
</dbReference>
<dbReference type="RNAct" id="Q99L28">
    <property type="molecule type" value="protein"/>
</dbReference>
<dbReference type="Bgee" id="ENSMUSG00000032215">
    <property type="expression patterns" value="Expressed in blastoderm cell in morula and 116 other cell types or tissues"/>
</dbReference>
<dbReference type="ExpressionAtlas" id="Q99L28">
    <property type="expression patterns" value="baseline and differential"/>
</dbReference>
<dbReference type="GO" id="GO:0005730">
    <property type="term" value="C:nucleolus"/>
    <property type="evidence" value="ECO:0007669"/>
    <property type="project" value="UniProtKB-SubCell"/>
</dbReference>
<dbReference type="GO" id="GO:0005654">
    <property type="term" value="C:nucleoplasm"/>
    <property type="evidence" value="ECO:0007669"/>
    <property type="project" value="Ensembl"/>
</dbReference>
<dbReference type="GO" id="GO:0003735">
    <property type="term" value="F:structural constituent of ribosome"/>
    <property type="evidence" value="ECO:0007669"/>
    <property type="project" value="InterPro"/>
</dbReference>
<dbReference type="GO" id="GO:0042254">
    <property type="term" value="P:ribosome biogenesis"/>
    <property type="evidence" value="ECO:0007669"/>
    <property type="project" value="UniProtKB-KW"/>
</dbReference>
<dbReference type="CDD" id="cd00472">
    <property type="entry name" value="Ribosomal_L24e_L24"/>
    <property type="match status" value="1"/>
</dbReference>
<dbReference type="FunFam" id="2.30.170.20:FF:000001">
    <property type="entry name" value="probable ribosome biogenesis protein RLP24"/>
    <property type="match status" value="1"/>
</dbReference>
<dbReference type="Gene3D" id="2.30.170.20">
    <property type="entry name" value="Ribosomal protein L24e"/>
    <property type="match status" value="1"/>
</dbReference>
<dbReference type="HAMAP" id="MF_00773">
    <property type="entry name" value="Ribosomal_eL24"/>
    <property type="match status" value="1"/>
</dbReference>
<dbReference type="InterPro" id="IPR038630">
    <property type="entry name" value="L24e/L24_sf"/>
</dbReference>
<dbReference type="InterPro" id="IPR056366">
    <property type="entry name" value="Ribosomal_eL24"/>
</dbReference>
<dbReference type="InterPro" id="IPR055345">
    <property type="entry name" value="Ribosomal_eL24-rel_arc"/>
</dbReference>
<dbReference type="InterPro" id="IPR000988">
    <property type="entry name" value="Ribosomal_eL24-rel_N"/>
</dbReference>
<dbReference type="InterPro" id="IPR023442">
    <property type="entry name" value="Ribosomal_eL24_CS"/>
</dbReference>
<dbReference type="InterPro" id="IPR011017">
    <property type="entry name" value="TRASH_dom"/>
</dbReference>
<dbReference type="PANTHER" id="PTHR10792">
    <property type="entry name" value="60S RIBOSOMAL PROTEIN L24"/>
    <property type="match status" value="1"/>
</dbReference>
<dbReference type="PANTHER" id="PTHR10792:SF8">
    <property type="entry name" value="RIBOSOME BIOGENESIS PROTEIN RLP24-RELATED"/>
    <property type="match status" value="1"/>
</dbReference>
<dbReference type="Pfam" id="PF01246">
    <property type="entry name" value="Ribosomal_L24e"/>
    <property type="match status" value="1"/>
</dbReference>
<dbReference type="SMART" id="SM00746">
    <property type="entry name" value="TRASH"/>
    <property type="match status" value="1"/>
</dbReference>
<dbReference type="SUPFAM" id="SSF57716">
    <property type="entry name" value="Glucocorticoid receptor-like (DNA-binding domain)"/>
    <property type="match status" value="1"/>
</dbReference>
<dbReference type="PROSITE" id="PS01073">
    <property type="entry name" value="RIBOSOMAL_L24E"/>
    <property type="match status" value="1"/>
</dbReference>
<accession>Q99L28</accession>
<sequence>MRIEKCYFCSGPIYPGHGMMFVRNDCKVFRFCKSKCHKNFKKKRNPRKVRWTKAFRKAAGKELTVDNSFEFEKRRNEPVKYQRELWNKTIDAMKRVEEIKQKRQAKFIMNRLKKNKELQKVQDIKEVKQNIHLIRAPLAGKGKQLEEKMVQQLQEDVDMEEAS</sequence>
<evidence type="ECO:0000250" key="1">
    <source>
        <dbReference type="UniProtKB" id="Q07915"/>
    </source>
</evidence>
<evidence type="ECO:0000250" key="2">
    <source>
        <dbReference type="UniProtKB" id="Q9UHA3"/>
    </source>
</evidence>
<evidence type="ECO:0000305" key="3"/>